<dbReference type="EC" id="1.11.1.24" evidence="1"/>
<dbReference type="EMBL" id="AE004091">
    <property type="protein sequence ID" value="AAG05920.1"/>
    <property type="molecule type" value="Genomic_DNA"/>
</dbReference>
<dbReference type="PIR" id="E83328">
    <property type="entry name" value="E83328"/>
</dbReference>
<dbReference type="RefSeq" id="NP_251222.1">
    <property type="nucleotide sequence ID" value="NC_002516.2"/>
</dbReference>
<dbReference type="RefSeq" id="WP_003089950.1">
    <property type="nucleotide sequence ID" value="NZ_QZGE01000008.1"/>
</dbReference>
<dbReference type="SMR" id="P57668"/>
<dbReference type="FunCoup" id="P57668">
    <property type="interactions" value="242"/>
</dbReference>
<dbReference type="STRING" id="208964.PA2532"/>
<dbReference type="PaxDb" id="208964-PA2532"/>
<dbReference type="GeneID" id="880363"/>
<dbReference type="KEGG" id="pae:PA2532"/>
<dbReference type="PATRIC" id="fig|208964.12.peg.2648"/>
<dbReference type="PseudoCAP" id="PA2532"/>
<dbReference type="HOGENOM" id="CLU_042529_12_2_6"/>
<dbReference type="InParanoid" id="P57668"/>
<dbReference type="OrthoDB" id="9781543at2"/>
<dbReference type="PhylomeDB" id="P57668"/>
<dbReference type="BioCyc" id="PAER208964:G1FZ6-2567-MONOMER"/>
<dbReference type="Proteomes" id="UP000002438">
    <property type="component" value="Chromosome"/>
</dbReference>
<dbReference type="GO" id="GO:0008379">
    <property type="term" value="F:thioredoxin peroxidase activity"/>
    <property type="evidence" value="ECO:0000314"/>
    <property type="project" value="PseudoCAP"/>
</dbReference>
<dbReference type="GO" id="GO:0070301">
    <property type="term" value="P:cellular response to hydrogen peroxide"/>
    <property type="evidence" value="ECO:0000315"/>
    <property type="project" value="PseudoCAP"/>
</dbReference>
<dbReference type="CDD" id="cd03014">
    <property type="entry name" value="PRX_Atyp2cys"/>
    <property type="match status" value="1"/>
</dbReference>
<dbReference type="FunFam" id="3.40.30.10:FF:000056">
    <property type="entry name" value="Thiol peroxidase"/>
    <property type="match status" value="1"/>
</dbReference>
<dbReference type="Gene3D" id="3.40.30.10">
    <property type="entry name" value="Glutaredoxin"/>
    <property type="match status" value="1"/>
</dbReference>
<dbReference type="HAMAP" id="MF_00269">
    <property type="entry name" value="Tpx"/>
    <property type="match status" value="1"/>
</dbReference>
<dbReference type="InterPro" id="IPR013740">
    <property type="entry name" value="Redoxin"/>
</dbReference>
<dbReference type="InterPro" id="IPR036249">
    <property type="entry name" value="Thioredoxin-like_sf"/>
</dbReference>
<dbReference type="InterPro" id="IPR013766">
    <property type="entry name" value="Thioredoxin_domain"/>
</dbReference>
<dbReference type="InterPro" id="IPR002065">
    <property type="entry name" value="TPX"/>
</dbReference>
<dbReference type="InterPro" id="IPR018219">
    <property type="entry name" value="Tpx_CS"/>
</dbReference>
<dbReference type="InterPro" id="IPR050455">
    <property type="entry name" value="Tpx_Peroxidase_subfamily"/>
</dbReference>
<dbReference type="NCBIfam" id="NF001808">
    <property type="entry name" value="PRK00522.1"/>
    <property type="match status" value="1"/>
</dbReference>
<dbReference type="PANTHER" id="PTHR43110">
    <property type="entry name" value="THIOL PEROXIDASE"/>
    <property type="match status" value="1"/>
</dbReference>
<dbReference type="PANTHER" id="PTHR43110:SF1">
    <property type="entry name" value="THIOL PEROXIDASE"/>
    <property type="match status" value="1"/>
</dbReference>
<dbReference type="Pfam" id="PF08534">
    <property type="entry name" value="Redoxin"/>
    <property type="match status" value="1"/>
</dbReference>
<dbReference type="SUPFAM" id="SSF52833">
    <property type="entry name" value="Thioredoxin-like"/>
    <property type="match status" value="1"/>
</dbReference>
<dbReference type="PROSITE" id="PS51352">
    <property type="entry name" value="THIOREDOXIN_2"/>
    <property type="match status" value="1"/>
</dbReference>
<dbReference type="PROSITE" id="PS01265">
    <property type="entry name" value="TPX"/>
    <property type="match status" value="1"/>
</dbReference>
<organism>
    <name type="scientific">Pseudomonas aeruginosa (strain ATCC 15692 / DSM 22644 / CIP 104116 / JCM 14847 / LMG 12228 / 1C / PRS 101 / PAO1)</name>
    <dbReference type="NCBI Taxonomy" id="208964"/>
    <lineage>
        <taxon>Bacteria</taxon>
        <taxon>Pseudomonadati</taxon>
        <taxon>Pseudomonadota</taxon>
        <taxon>Gammaproteobacteria</taxon>
        <taxon>Pseudomonadales</taxon>
        <taxon>Pseudomonadaceae</taxon>
        <taxon>Pseudomonas</taxon>
    </lineage>
</organism>
<proteinExistence type="inferred from homology"/>
<reference key="1">
    <citation type="journal article" date="2000" name="Nature">
        <title>Complete genome sequence of Pseudomonas aeruginosa PAO1, an opportunistic pathogen.</title>
        <authorList>
            <person name="Stover C.K."/>
            <person name="Pham X.-Q.T."/>
            <person name="Erwin A.L."/>
            <person name="Mizoguchi S.D."/>
            <person name="Warrener P."/>
            <person name="Hickey M.J."/>
            <person name="Brinkman F.S.L."/>
            <person name="Hufnagle W.O."/>
            <person name="Kowalik D.J."/>
            <person name="Lagrou M."/>
            <person name="Garber R.L."/>
            <person name="Goltry L."/>
            <person name="Tolentino E."/>
            <person name="Westbrock-Wadman S."/>
            <person name="Yuan Y."/>
            <person name="Brody L.L."/>
            <person name="Coulter S.N."/>
            <person name="Folger K.R."/>
            <person name="Kas A."/>
            <person name="Larbig K."/>
            <person name="Lim R.M."/>
            <person name="Smith K.A."/>
            <person name="Spencer D.H."/>
            <person name="Wong G.K.-S."/>
            <person name="Wu Z."/>
            <person name="Paulsen I.T."/>
            <person name="Reizer J."/>
            <person name="Saier M.H. Jr."/>
            <person name="Hancock R.E.W."/>
            <person name="Lory S."/>
            <person name="Olson M.V."/>
        </authorList>
    </citation>
    <scope>NUCLEOTIDE SEQUENCE [LARGE SCALE GENOMIC DNA]</scope>
    <source>
        <strain>ATCC 15692 / DSM 22644 / CIP 104116 / JCM 14847 / LMG 12228 / 1C / PRS 101 / PAO1</strain>
    </source>
</reference>
<sequence length="165" mass="17234">MAQVTLKGNPVNVDGQLPQKGAQAPAFSLVGGDLADVTLENFAGKRKVLNIFPSVDTPTCATSVRKFNVEAGKLANTVVLCISADLPFAQKRFCGAEGLENVVNLSTLRGREFLENYGVAIASGPLAGLAARAVVVLDEQNKVLHSELVGEIADEPNYAAALAAL</sequence>
<gene>
    <name evidence="1" type="primary">tpx</name>
    <name type="ordered locus">PA2532</name>
</gene>
<accession>P57668</accession>
<evidence type="ECO:0000255" key="1">
    <source>
        <dbReference type="HAMAP-Rule" id="MF_00269"/>
    </source>
</evidence>
<feature type="chain" id="PRO_0000187892" description="Thiol peroxidase">
    <location>
        <begin position="1"/>
        <end position="165"/>
    </location>
</feature>
<feature type="domain" description="Thioredoxin" evidence="1">
    <location>
        <begin position="18"/>
        <end position="165"/>
    </location>
</feature>
<feature type="active site" description="Cysteine sulfenic acid (-SOH) intermediate" evidence="1">
    <location>
        <position position="60"/>
    </location>
</feature>
<feature type="disulfide bond" description="Redox-active" evidence="1">
    <location>
        <begin position="60"/>
        <end position="94"/>
    </location>
</feature>
<name>TPX_PSEAE</name>
<keyword id="KW-0049">Antioxidant</keyword>
<keyword id="KW-1015">Disulfide bond</keyword>
<keyword id="KW-0560">Oxidoreductase</keyword>
<keyword id="KW-0575">Peroxidase</keyword>
<keyword id="KW-0676">Redox-active center</keyword>
<keyword id="KW-1185">Reference proteome</keyword>
<protein>
    <recommendedName>
        <fullName evidence="1">Thiol peroxidase</fullName>
        <shortName evidence="1">Tpx</shortName>
        <ecNumber evidence="1">1.11.1.24</ecNumber>
    </recommendedName>
    <alternativeName>
        <fullName evidence="1">Peroxiredoxin tpx</fullName>
        <shortName evidence="1">Prx</shortName>
    </alternativeName>
    <alternativeName>
        <fullName evidence="1">Thioredoxin peroxidase</fullName>
    </alternativeName>
    <alternativeName>
        <fullName evidence="1">Thioredoxin-dependent peroxiredoxin</fullName>
    </alternativeName>
</protein>
<comment type="function">
    <text evidence="1">Thiol-specific peroxidase that catalyzes the reduction of hydrogen peroxide and organic hydroperoxides to water and alcohols, respectively. Plays a role in cell protection against oxidative stress by detoxifying peroxides.</text>
</comment>
<comment type="catalytic activity">
    <reaction evidence="1">
        <text>a hydroperoxide + [thioredoxin]-dithiol = an alcohol + [thioredoxin]-disulfide + H2O</text>
        <dbReference type="Rhea" id="RHEA:62620"/>
        <dbReference type="Rhea" id="RHEA-COMP:10698"/>
        <dbReference type="Rhea" id="RHEA-COMP:10700"/>
        <dbReference type="ChEBI" id="CHEBI:15377"/>
        <dbReference type="ChEBI" id="CHEBI:29950"/>
        <dbReference type="ChEBI" id="CHEBI:30879"/>
        <dbReference type="ChEBI" id="CHEBI:35924"/>
        <dbReference type="ChEBI" id="CHEBI:50058"/>
        <dbReference type="EC" id="1.11.1.24"/>
    </reaction>
</comment>
<comment type="subunit">
    <text evidence="1">Homodimer.</text>
</comment>
<comment type="miscellaneous">
    <text evidence="1">The active site is a conserved redox-active cysteine residue, the peroxidatic cysteine (C(P)), which makes the nucleophilic attack on the peroxide substrate. The peroxide oxidizes the C(P)-SH to cysteine sulfenic acid (C(P)-SOH), which then reacts with another cysteine residue, the resolving cysteine (C(R)), to form a disulfide bridge. The disulfide is subsequently reduced by an appropriate electron donor to complete the catalytic cycle. In this atypical 2-Cys peroxiredoxin, C(R) is present in the same subunit to form an intramolecular disulfide. The disulfide is subsequently reduced by thioredoxin.</text>
</comment>
<comment type="similarity">
    <text evidence="1">Belongs to the peroxiredoxin family. Tpx subfamily.</text>
</comment>